<gene>
    <name evidence="1" type="primary">recA</name>
    <name type="ordered locus">P9215_18341</name>
</gene>
<keyword id="KW-0067">ATP-binding</keyword>
<keyword id="KW-0963">Cytoplasm</keyword>
<keyword id="KW-0227">DNA damage</keyword>
<keyword id="KW-0233">DNA recombination</keyword>
<keyword id="KW-0234">DNA repair</keyword>
<keyword id="KW-0238">DNA-binding</keyword>
<keyword id="KW-0547">Nucleotide-binding</keyword>
<keyword id="KW-0742">SOS response</keyword>
<reference key="1">
    <citation type="journal article" date="2007" name="PLoS Genet.">
        <title>Patterns and implications of gene gain and loss in the evolution of Prochlorococcus.</title>
        <authorList>
            <person name="Kettler G.C."/>
            <person name="Martiny A.C."/>
            <person name="Huang K."/>
            <person name="Zucker J."/>
            <person name="Coleman M.L."/>
            <person name="Rodrigue S."/>
            <person name="Chen F."/>
            <person name="Lapidus A."/>
            <person name="Ferriera S."/>
            <person name="Johnson J."/>
            <person name="Steglich C."/>
            <person name="Church G.M."/>
            <person name="Richardson P."/>
            <person name="Chisholm S.W."/>
        </authorList>
    </citation>
    <scope>NUCLEOTIDE SEQUENCE [LARGE SCALE GENOMIC DNA]</scope>
    <source>
        <strain>MIT 9215</strain>
    </source>
</reference>
<name>RECA_PROM2</name>
<comment type="function">
    <text evidence="1">Can catalyze the hydrolysis of ATP in the presence of single-stranded DNA, the ATP-dependent uptake of single-stranded DNA by duplex DNA, and the ATP-dependent hybridization of homologous single-stranded DNAs. It interacts with LexA causing its activation and leading to its autocatalytic cleavage.</text>
</comment>
<comment type="subcellular location">
    <subcellularLocation>
        <location evidence="1">Cytoplasm</location>
    </subcellularLocation>
</comment>
<comment type="similarity">
    <text evidence="1">Belongs to the RecA family.</text>
</comment>
<organism>
    <name type="scientific">Prochlorococcus marinus (strain MIT 9215)</name>
    <dbReference type="NCBI Taxonomy" id="93060"/>
    <lineage>
        <taxon>Bacteria</taxon>
        <taxon>Bacillati</taxon>
        <taxon>Cyanobacteriota</taxon>
        <taxon>Cyanophyceae</taxon>
        <taxon>Synechococcales</taxon>
        <taxon>Prochlorococcaceae</taxon>
        <taxon>Prochlorococcus</taxon>
    </lineage>
</organism>
<proteinExistence type="inferred from homology"/>
<sequence length="365" mass="39433">MSLEEKKTTESKEKDKALSLVLGQIERNFGRGSIMRLGDASRMKVETISTGALTLDLALGGGYPKGRVVEVYGPESSGKTTLTLHAIAEVQKNGGVAAFVDAEHALDPVYAASLGVDVENLLVSQPDTGEMALEIVDQLIRSSAVDLVVVDSVAALTPRAEIEGEMGDHVIGSQARLMSQAMRKITGNIGKSGCTVIFLNQLRLKIGITYGNPETTTGGNALKFYASVRLDIRRIQTLKRGTEEYGIRAKVKVAKNKVAPPFRIAEFDILFGKGISTTGCLLDLAEETNIIIRRGAWYSYEGENIGQGRDNTIIWLDQNLEIKNKVESMIKEKLTEGTEVSSNSMKALNSNPTSTIAVNDIKTVA</sequence>
<dbReference type="EMBL" id="CP000825">
    <property type="protein sequence ID" value="ABV51447.1"/>
    <property type="molecule type" value="Genomic_DNA"/>
</dbReference>
<dbReference type="RefSeq" id="WP_012008451.1">
    <property type="nucleotide sequence ID" value="NC_009840.1"/>
</dbReference>
<dbReference type="SMR" id="A8G766"/>
<dbReference type="STRING" id="93060.P9215_18341"/>
<dbReference type="KEGG" id="pmh:P9215_18341"/>
<dbReference type="eggNOG" id="COG0468">
    <property type="taxonomic scope" value="Bacteria"/>
</dbReference>
<dbReference type="HOGENOM" id="CLU_040469_3_2_3"/>
<dbReference type="OrthoDB" id="9776733at2"/>
<dbReference type="Proteomes" id="UP000002014">
    <property type="component" value="Chromosome"/>
</dbReference>
<dbReference type="GO" id="GO:0005829">
    <property type="term" value="C:cytosol"/>
    <property type="evidence" value="ECO:0007669"/>
    <property type="project" value="TreeGrafter"/>
</dbReference>
<dbReference type="GO" id="GO:0005524">
    <property type="term" value="F:ATP binding"/>
    <property type="evidence" value="ECO:0007669"/>
    <property type="project" value="UniProtKB-UniRule"/>
</dbReference>
<dbReference type="GO" id="GO:0016887">
    <property type="term" value="F:ATP hydrolysis activity"/>
    <property type="evidence" value="ECO:0007669"/>
    <property type="project" value="InterPro"/>
</dbReference>
<dbReference type="GO" id="GO:0140664">
    <property type="term" value="F:ATP-dependent DNA damage sensor activity"/>
    <property type="evidence" value="ECO:0007669"/>
    <property type="project" value="InterPro"/>
</dbReference>
<dbReference type="GO" id="GO:0003684">
    <property type="term" value="F:damaged DNA binding"/>
    <property type="evidence" value="ECO:0007669"/>
    <property type="project" value="UniProtKB-UniRule"/>
</dbReference>
<dbReference type="GO" id="GO:0003697">
    <property type="term" value="F:single-stranded DNA binding"/>
    <property type="evidence" value="ECO:0007669"/>
    <property type="project" value="UniProtKB-UniRule"/>
</dbReference>
<dbReference type="GO" id="GO:0006310">
    <property type="term" value="P:DNA recombination"/>
    <property type="evidence" value="ECO:0007669"/>
    <property type="project" value="UniProtKB-UniRule"/>
</dbReference>
<dbReference type="GO" id="GO:0006281">
    <property type="term" value="P:DNA repair"/>
    <property type="evidence" value="ECO:0007669"/>
    <property type="project" value="UniProtKB-UniRule"/>
</dbReference>
<dbReference type="GO" id="GO:0009432">
    <property type="term" value="P:SOS response"/>
    <property type="evidence" value="ECO:0007669"/>
    <property type="project" value="UniProtKB-UniRule"/>
</dbReference>
<dbReference type="CDD" id="cd00983">
    <property type="entry name" value="RecA"/>
    <property type="match status" value="1"/>
</dbReference>
<dbReference type="FunFam" id="3.40.50.300:FF:000087">
    <property type="entry name" value="Recombinase RecA"/>
    <property type="match status" value="1"/>
</dbReference>
<dbReference type="Gene3D" id="3.40.50.300">
    <property type="entry name" value="P-loop containing nucleotide triphosphate hydrolases"/>
    <property type="match status" value="1"/>
</dbReference>
<dbReference type="HAMAP" id="MF_00268">
    <property type="entry name" value="RecA"/>
    <property type="match status" value="1"/>
</dbReference>
<dbReference type="InterPro" id="IPR003593">
    <property type="entry name" value="AAA+_ATPase"/>
</dbReference>
<dbReference type="InterPro" id="IPR013765">
    <property type="entry name" value="DNA_recomb/repair_RecA"/>
</dbReference>
<dbReference type="InterPro" id="IPR020584">
    <property type="entry name" value="DNA_recomb/repair_RecA_CS"/>
</dbReference>
<dbReference type="InterPro" id="IPR027417">
    <property type="entry name" value="P-loop_NTPase"/>
</dbReference>
<dbReference type="InterPro" id="IPR049261">
    <property type="entry name" value="RecA-like_C"/>
</dbReference>
<dbReference type="InterPro" id="IPR049428">
    <property type="entry name" value="RecA-like_N"/>
</dbReference>
<dbReference type="InterPro" id="IPR020588">
    <property type="entry name" value="RecA_ATP-bd"/>
</dbReference>
<dbReference type="InterPro" id="IPR023400">
    <property type="entry name" value="RecA_C_sf"/>
</dbReference>
<dbReference type="InterPro" id="IPR020587">
    <property type="entry name" value="RecA_monomer-monomer_interface"/>
</dbReference>
<dbReference type="NCBIfam" id="TIGR02012">
    <property type="entry name" value="tigrfam_recA"/>
    <property type="match status" value="1"/>
</dbReference>
<dbReference type="PANTHER" id="PTHR45900:SF1">
    <property type="entry name" value="MITOCHONDRIAL DNA REPAIR PROTEIN RECA HOMOLOG-RELATED"/>
    <property type="match status" value="1"/>
</dbReference>
<dbReference type="PANTHER" id="PTHR45900">
    <property type="entry name" value="RECA"/>
    <property type="match status" value="1"/>
</dbReference>
<dbReference type="Pfam" id="PF00154">
    <property type="entry name" value="RecA"/>
    <property type="match status" value="1"/>
</dbReference>
<dbReference type="Pfam" id="PF21096">
    <property type="entry name" value="RecA_C"/>
    <property type="match status" value="1"/>
</dbReference>
<dbReference type="PRINTS" id="PR00142">
    <property type="entry name" value="RECA"/>
</dbReference>
<dbReference type="SMART" id="SM00382">
    <property type="entry name" value="AAA"/>
    <property type="match status" value="1"/>
</dbReference>
<dbReference type="SUPFAM" id="SSF52540">
    <property type="entry name" value="P-loop containing nucleoside triphosphate hydrolases"/>
    <property type="match status" value="1"/>
</dbReference>
<dbReference type="SUPFAM" id="SSF54752">
    <property type="entry name" value="RecA protein, C-terminal domain"/>
    <property type="match status" value="1"/>
</dbReference>
<dbReference type="PROSITE" id="PS00321">
    <property type="entry name" value="RECA_1"/>
    <property type="match status" value="1"/>
</dbReference>
<dbReference type="PROSITE" id="PS50162">
    <property type="entry name" value="RECA_2"/>
    <property type="match status" value="1"/>
</dbReference>
<dbReference type="PROSITE" id="PS50163">
    <property type="entry name" value="RECA_3"/>
    <property type="match status" value="1"/>
</dbReference>
<protein>
    <recommendedName>
        <fullName evidence="1">Protein RecA</fullName>
    </recommendedName>
    <alternativeName>
        <fullName evidence="1">Recombinase A</fullName>
    </alternativeName>
</protein>
<evidence type="ECO:0000255" key="1">
    <source>
        <dbReference type="HAMAP-Rule" id="MF_00268"/>
    </source>
</evidence>
<accession>A8G766</accession>
<feature type="chain" id="PRO_1000059131" description="Protein RecA">
    <location>
        <begin position="1"/>
        <end position="365"/>
    </location>
</feature>
<feature type="binding site" evidence="1">
    <location>
        <begin position="73"/>
        <end position="80"/>
    </location>
    <ligand>
        <name>ATP</name>
        <dbReference type="ChEBI" id="CHEBI:30616"/>
    </ligand>
</feature>